<feature type="chain" id="PRO_1000018847" description="Bifunctional purine biosynthesis protein PurH">
    <location>
        <begin position="1"/>
        <end position="526"/>
    </location>
</feature>
<feature type="domain" description="MGS-like" evidence="2">
    <location>
        <begin position="1"/>
        <end position="148"/>
    </location>
</feature>
<evidence type="ECO:0000255" key="1">
    <source>
        <dbReference type="HAMAP-Rule" id="MF_00139"/>
    </source>
</evidence>
<evidence type="ECO:0000255" key="2">
    <source>
        <dbReference type="PROSITE-ProRule" id="PRU01202"/>
    </source>
</evidence>
<reference key="1">
    <citation type="journal article" date="2006" name="PLoS Biol.">
        <title>Metabolic complementarity and genomics of the dual bacterial symbiosis of sharpshooters.</title>
        <authorList>
            <person name="Wu D."/>
            <person name="Daugherty S.C."/>
            <person name="Van Aken S.E."/>
            <person name="Pai G.H."/>
            <person name="Watkins K.L."/>
            <person name="Khouri H."/>
            <person name="Tallon L.J."/>
            <person name="Zaborsky J.M."/>
            <person name="Dunbar H.E."/>
            <person name="Tran P.L."/>
            <person name="Moran N.A."/>
            <person name="Eisen J.A."/>
        </authorList>
    </citation>
    <scope>NUCLEOTIDE SEQUENCE [LARGE SCALE GENOMIC DNA]</scope>
</reference>
<dbReference type="EC" id="2.1.2.3" evidence="1"/>
<dbReference type="EC" id="3.5.4.10" evidence="1"/>
<dbReference type="EMBL" id="CP000238">
    <property type="protein sequence ID" value="ABF13814.1"/>
    <property type="molecule type" value="Genomic_DNA"/>
</dbReference>
<dbReference type="RefSeq" id="WP_011520246.1">
    <property type="nucleotide sequence ID" value="NC_007984.1"/>
</dbReference>
<dbReference type="SMR" id="Q1LU51"/>
<dbReference type="STRING" id="374463.BCI_0035"/>
<dbReference type="KEGG" id="bci:BCI_0035"/>
<dbReference type="HOGENOM" id="CLU_016316_5_2_6"/>
<dbReference type="OrthoDB" id="9802065at2"/>
<dbReference type="UniPathway" id="UPA00074">
    <property type="reaction ID" value="UER00133"/>
</dbReference>
<dbReference type="UniPathway" id="UPA00074">
    <property type="reaction ID" value="UER00135"/>
</dbReference>
<dbReference type="Proteomes" id="UP000002427">
    <property type="component" value="Chromosome"/>
</dbReference>
<dbReference type="GO" id="GO:0005829">
    <property type="term" value="C:cytosol"/>
    <property type="evidence" value="ECO:0007669"/>
    <property type="project" value="TreeGrafter"/>
</dbReference>
<dbReference type="GO" id="GO:0003937">
    <property type="term" value="F:IMP cyclohydrolase activity"/>
    <property type="evidence" value="ECO:0007669"/>
    <property type="project" value="UniProtKB-UniRule"/>
</dbReference>
<dbReference type="GO" id="GO:0004643">
    <property type="term" value="F:phosphoribosylaminoimidazolecarboxamide formyltransferase activity"/>
    <property type="evidence" value="ECO:0007669"/>
    <property type="project" value="UniProtKB-UniRule"/>
</dbReference>
<dbReference type="GO" id="GO:0006189">
    <property type="term" value="P:'de novo' IMP biosynthetic process"/>
    <property type="evidence" value="ECO:0007669"/>
    <property type="project" value="UniProtKB-UniRule"/>
</dbReference>
<dbReference type="CDD" id="cd01421">
    <property type="entry name" value="IMPCH"/>
    <property type="match status" value="1"/>
</dbReference>
<dbReference type="FunFam" id="3.40.140.20:FF:000001">
    <property type="entry name" value="Bifunctional purine biosynthesis protein PurH"/>
    <property type="match status" value="1"/>
</dbReference>
<dbReference type="FunFam" id="3.40.140.20:FF:000002">
    <property type="entry name" value="Bifunctional purine biosynthesis protein PurH"/>
    <property type="match status" value="1"/>
</dbReference>
<dbReference type="FunFam" id="3.40.50.1380:FF:000001">
    <property type="entry name" value="Bifunctional purine biosynthesis protein PurH"/>
    <property type="match status" value="1"/>
</dbReference>
<dbReference type="Gene3D" id="3.40.140.20">
    <property type="match status" value="2"/>
</dbReference>
<dbReference type="Gene3D" id="3.40.50.1380">
    <property type="entry name" value="Methylglyoxal synthase-like domain"/>
    <property type="match status" value="1"/>
</dbReference>
<dbReference type="HAMAP" id="MF_00139">
    <property type="entry name" value="PurH"/>
    <property type="match status" value="1"/>
</dbReference>
<dbReference type="InterPro" id="IPR024051">
    <property type="entry name" value="AICAR_Tfase_dup_dom_sf"/>
</dbReference>
<dbReference type="InterPro" id="IPR016193">
    <property type="entry name" value="Cytidine_deaminase-like"/>
</dbReference>
<dbReference type="InterPro" id="IPR011607">
    <property type="entry name" value="MGS-like_dom"/>
</dbReference>
<dbReference type="InterPro" id="IPR036914">
    <property type="entry name" value="MGS-like_dom_sf"/>
</dbReference>
<dbReference type="InterPro" id="IPR002695">
    <property type="entry name" value="PurH-like"/>
</dbReference>
<dbReference type="NCBIfam" id="NF002049">
    <property type="entry name" value="PRK00881.1"/>
    <property type="match status" value="1"/>
</dbReference>
<dbReference type="NCBIfam" id="TIGR00355">
    <property type="entry name" value="purH"/>
    <property type="match status" value="1"/>
</dbReference>
<dbReference type="PANTHER" id="PTHR11692:SF0">
    <property type="entry name" value="BIFUNCTIONAL PURINE BIOSYNTHESIS PROTEIN ATIC"/>
    <property type="match status" value="1"/>
</dbReference>
<dbReference type="PANTHER" id="PTHR11692">
    <property type="entry name" value="BIFUNCTIONAL PURINE BIOSYNTHESIS PROTEIN PURH"/>
    <property type="match status" value="1"/>
</dbReference>
<dbReference type="Pfam" id="PF01808">
    <property type="entry name" value="AICARFT_IMPCHas"/>
    <property type="match status" value="1"/>
</dbReference>
<dbReference type="Pfam" id="PF02142">
    <property type="entry name" value="MGS"/>
    <property type="match status" value="1"/>
</dbReference>
<dbReference type="PIRSF" id="PIRSF000414">
    <property type="entry name" value="AICARFT_IMPCHas"/>
    <property type="match status" value="1"/>
</dbReference>
<dbReference type="SMART" id="SM00798">
    <property type="entry name" value="AICARFT_IMPCHas"/>
    <property type="match status" value="1"/>
</dbReference>
<dbReference type="SMART" id="SM00851">
    <property type="entry name" value="MGS"/>
    <property type="match status" value="1"/>
</dbReference>
<dbReference type="SUPFAM" id="SSF53927">
    <property type="entry name" value="Cytidine deaminase-like"/>
    <property type="match status" value="1"/>
</dbReference>
<dbReference type="SUPFAM" id="SSF52335">
    <property type="entry name" value="Methylglyoxal synthase-like"/>
    <property type="match status" value="1"/>
</dbReference>
<dbReference type="PROSITE" id="PS51855">
    <property type="entry name" value="MGS"/>
    <property type="match status" value="1"/>
</dbReference>
<organism>
    <name type="scientific">Baumannia cicadellinicola subsp. Homalodisca coagulata</name>
    <dbReference type="NCBI Taxonomy" id="374463"/>
    <lineage>
        <taxon>Bacteria</taxon>
        <taxon>Pseudomonadati</taxon>
        <taxon>Pseudomonadota</taxon>
        <taxon>Gammaproteobacteria</taxon>
        <taxon>Candidatus Palibaumannia</taxon>
    </lineage>
</organism>
<proteinExistence type="inferred from homology"/>
<accession>Q1LU51</accession>
<gene>
    <name evidence="1" type="primary">purH</name>
    <name type="ordered locus">BCI_0035</name>
</gene>
<sequence length="526" mass="58384">MQRPIIIRRALLSVSDKTNICELAKSLLKRGVQLISTNGTARLLVNAGIHVTEVSNYTGFPEIMDGRVKTLHPKIHGGILARRNIDDTIMQQYKIEHIDMVVVNLYPFAEVVASATCNHEKVVENIDIGGTALLRSAAKNYSNVVVVVSINDYISIINEIDCNNGAVSLETRLNLAIKAFQHTATYDSQIKDYFTSQVYTDSSKCSSIFPPILNINFVKKQDMRYGENQHQLAAFYLDTRNKEKSIATTKQLQGRALSYNNIADADAALECVKEFSEPACVIVKHINPCSVAMGKTILVAYQRAYETDPTSAFGGVIAFNRSLDLCTAQEIIARQFIEVIIAPTVDQEALLILAKKKNIRVLSSGQWNKPIPNLNFRQVNGGLLVQERDLVMINLHDLRIVSQRQPTTMEIQDALFCWKVVKFVKSNAIVYARNQRTIGIGAGQMSRIDSAKIASIKAIDNKLNIRGSTMASDAFFPFRDGLDSAAKVGVSCVIQPGGSIRDQEVITAANEHNIAMIFTNIRHFRH</sequence>
<protein>
    <recommendedName>
        <fullName evidence="1">Bifunctional purine biosynthesis protein PurH</fullName>
    </recommendedName>
    <domain>
        <recommendedName>
            <fullName evidence="1">Phosphoribosylaminoimidazolecarboxamide formyltransferase</fullName>
            <ecNumber evidence="1">2.1.2.3</ecNumber>
        </recommendedName>
        <alternativeName>
            <fullName evidence="1">AICAR transformylase</fullName>
        </alternativeName>
    </domain>
    <domain>
        <recommendedName>
            <fullName evidence="1">IMP cyclohydrolase</fullName>
            <ecNumber evidence="1">3.5.4.10</ecNumber>
        </recommendedName>
        <alternativeName>
            <fullName evidence="1">ATIC</fullName>
        </alternativeName>
        <alternativeName>
            <fullName evidence="1">IMP synthase</fullName>
        </alternativeName>
        <alternativeName>
            <fullName evidence="1">Inosinicase</fullName>
        </alternativeName>
    </domain>
</protein>
<comment type="catalytic activity">
    <reaction evidence="1">
        <text>(6R)-10-formyltetrahydrofolate + 5-amino-1-(5-phospho-beta-D-ribosyl)imidazole-4-carboxamide = 5-formamido-1-(5-phospho-D-ribosyl)imidazole-4-carboxamide + (6S)-5,6,7,8-tetrahydrofolate</text>
        <dbReference type="Rhea" id="RHEA:22192"/>
        <dbReference type="ChEBI" id="CHEBI:57453"/>
        <dbReference type="ChEBI" id="CHEBI:58467"/>
        <dbReference type="ChEBI" id="CHEBI:58475"/>
        <dbReference type="ChEBI" id="CHEBI:195366"/>
        <dbReference type="EC" id="2.1.2.3"/>
    </reaction>
</comment>
<comment type="catalytic activity">
    <reaction evidence="1">
        <text>IMP + H2O = 5-formamido-1-(5-phospho-D-ribosyl)imidazole-4-carboxamide</text>
        <dbReference type="Rhea" id="RHEA:18445"/>
        <dbReference type="ChEBI" id="CHEBI:15377"/>
        <dbReference type="ChEBI" id="CHEBI:58053"/>
        <dbReference type="ChEBI" id="CHEBI:58467"/>
        <dbReference type="EC" id="3.5.4.10"/>
    </reaction>
</comment>
<comment type="pathway">
    <text evidence="1">Purine metabolism; IMP biosynthesis via de novo pathway; 5-formamido-1-(5-phospho-D-ribosyl)imidazole-4-carboxamide from 5-amino-1-(5-phospho-D-ribosyl)imidazole-4-carboxamide (10-formyl THF route): step 1/1.</text>
</comment>
<comment type="pathway">
    <text evidence="1">Purine metabolism; IMP biosynthesis via de novo pathway; IMP from 5-formamido-1-(5-phospho-D-ribosyl)imidazole-4-carboxamide: step 1/1.</text>
</comment>
<comment type="domain">
    <text evidence="1">The IMP cyclohydrolase activity resides in the N-terminal region.</text>
</comment>
<comment type="similarity">
    <text evidence="1">Belongs to the PurH family.</text>
</comment>
<name>PUR9_BAUCH</name>
<keyword id="KW-0378">Hydrolase</keyword>
<keyword id="KW-0511">Multifunctional enzyme</keyword>
<keyword id="KW-0658">Purine biosynthesis</keyword>
<keyword id="KW-1185">Reference proteome</keyword>
<keyword id="KW-0808">Transferase</keyword>